<organism>
    <name type="scientific">Enterococcus faecalis (strain ATCC 700802 / V583)</name>
    <dbReference type="NCBI Taxonomy" id="226185"/>
    <lineage>
        <taxon>Bacteria</taxon>
        <taxon>Bacillati</taxon>
        <taxon>Bacillota</taxon>
        <taxon>Bacilli</taxon>
        <taxon>Lactobacillales</taxon>
        <taxon>Enterococcaceae</taxon>
        <taxon>Enterococcus</taxon>
    </lineage>
</organism>
<feature type="chain" id="PRO_0000046118" description="Potassium-transporting ATPase ATP-binding subunit">
    <location>
        <begin position="1"/>
        <end position="676"/>
    </location>
</feature>
<feature type="transmembrane region" description="Helical" evidence="1">
    <location>
        <begin position="24"/>
        <end position="44"/>
    </location>
</feature>
<feature type="transmembrane region" description="Helical" evidence="1">
    <location>
        <begin position="45"/>
        <end position="65"/>
    </location>
</feature>
<feature type="transmembrane region" description="Helical" evidence="1">
    <location>
        <begin position="212"/>
        <end position="232"/>
    </location>
</feature>
<feature type="transmembrane region" description="Helical" evidence="1">
    <location>
        <begin position="246"/>
        <end position="266"/>
    </location>
</feature>
<feature type="transmembrane region" description="Helical" evidence="1">
    <location>
        <begin position="573"/>
        <end position="593"/>
    </location>
</feature>
<feature type="transmembrane region" description="Helical" evidence="1">
    <location>
        <begin position="611"/>
        <end position="631"/>
    </location>
</feature>
<feature type="transmembrane region" description="Helical" evidence="1">
    <location>
        <begin position="656"/>
        <end position="676"/>
    </location>
</feature>
<feature type="active site" description="4-aspartylphosphate intermediate" evidence="1">
    <location>
        <position position="302"/>
    </location>
</feature>
<feature type="binding site" evidence="1">
    <location>
        <position position="339"/>
    </location>
    <ligand>
        <name>ATP</name>
        <dbReference type="ChEBI" id="CHEBI:30616"/>
    </ligand>
</feature>
<feature type="binding site" evidence="1">
    <location>
        <position position="343"/>
    </location>
    <ligand>
        <name>ATP</name>
        <dbReference type="ChEBI" id="CHEBI:30616"/>
    </ligand>
</feature>
<feature type="binding site" evidence="1">
    <location>
        <begin position="372"/>
        <end position="379"/>
    </location>
    <ligand>
        <name>ATP</name>
        <dbReference type="ChEBI" id="CHEBI:30616"/>
    </ligand>
</feature>
<feature type="binding site" evidence="1">
    <location>
        <position position="390"/>
    </location>
    <ligand>
        <name>ATP</name>
        <dbReference type="ChEBI" id="CHEBI:30616"/>
    </ligand>
</feature>
<feature type="binding site" evidence="1">
    <location>
        <position position="513"/>
    </location>
    <ligand>
        <name>Mg(2+)</name>
        <dbReference type="ChEBI" id="CHEBI:18420"/>
    </ligand>
</feature>
<feature type="binding site" evidence="1">
    <location>
        <position position="517"/>
    </location>
    <ligand>
        <name>Mg(2+)</name>
        <dbReference type="ChEBI" id="CHEBI:18420"/>
    </ligand>
</feature>
<dbReference type="EC" id="7.2.2.6" evidence="1"/>
<dbReference type="EMBL" id="AF454824">
    <property type="protein sequence ID" value="AAM75291.1"/>
    <property type="molecule type" value="Genomic_DNA"/>
</dbReference>
<dbReference type="EMBL" id="AE016830">
    <property type="protein sequence ID" value="AAO80405.1"/>
    <property type="molecule type" value="Genomic_DNA"/>
</dbReference>
<dbReference type="RefSeq" id="NP_814334.1">
    <property type="nucleotide sequence ID" value="NC_004668.1"/>
</dbReference>
<dbReference type="RefSeq" id="WP_002377969.1">
    <property type="nucleotide sequence ID" value="NZ_KE136527.1"/>
</dbReference>
<dbReference type="SMR" id="Q8KU73"/>
<dbReference type="STRING" id="226185.EF_0568"/>
<dbReference type="EnsemblBacteria" id="AAO80405">
    <property type="protein sequence ID" value="AAO80405"/>
    <property type="gene ID" value="EF_0568"/>
</dbReference>
<dbReference type="KEGG" id="efa:EF0568"/>
<dbReference type="PATRIC" id="fig|226185.45.peg.2509"/>
<dbReference type="eggNOG" id="COG2216">
    <property type="taxonomic scope" value="Bacteria"/>
</dbReference>
<dbReference type="HOGENOM" id="CLU_025728_2_0_9"/>
<dbReference type="SABIO-RK" id="Q8KU73"/>
<dbReference type="Proteomes" id="UP000001415">
    <property type="component" value="Chromosome"/>
</dbReference>
<dbReference type="GO" id="GO:0005886">
    <property type="term" value="C:plasma membrane"/>
    <property type="evidence" value="ECO:0007669"/>
    <property type="project" value="UniProtKB-SubCell"/>
</dbReference>
<dbReference type="GO" id="GO:0005524">
    <property type="term" value="F:ATP binding"/>
    <property type="evidence" value="ECO:0007669"/>
    <property type="project" value="UniProtKB-UniRule"/>
</dbReference>
<dbReference type="GO" id="GO:0016887">
    <property type="term" value="F:ATP hydrolysis activity"/>
    <property type="evidence" value="ECO:0007669"/>
    <property type="project" value="InterPro"/>
</dbReference>
<dbReference type="GO" id="GO:0000287">
    <property type="term" value="F:magnesium ion binding"/>
    <property type="evidence" value="ECO:0007669"/>
    <property type="project" value="UniProtKB-UniRule"/>
</dbReference>
<dbReference type="GO" id="GO:0008556">
    <property type="term" value="F:P-type potassium transmembrane transporter activity"/>
    <property type="evidence" value="ECO:0007669"/>
    <property type="project" value="UniProtKB-UniRule"/>
</dbReference>
<dbReference type="CDD" id="cd02078">
    <property type="entry name" value="P-type_ATPase_K"/>
    <property type="match status" value="1"/>
</dbReference>
<dbReference type="FunFam" id="2.70.150.10:FF:000010">
    <property type="entry name" value="Potassium-transporting ATPase ATP-binding subunit"/>
    <property type="match status" value="1"/>
</dbReference>
<dbReference type="FunFam" id="3.40.1110.10:FF:000007">
    <property type="entry name" value="Potassium-transporting ATPase ATP-binding subunit"/>
    <property type="match status" value="1"/>
</dbReference>
<dbReference type="Gene3D" id="3.40.1110.10">
    <property type="entry name" value="Calcium-transporting ATPase, cytoplasmic domain N"/>
    <property type="match status" value="1"/>
</dbReference>
<dbReference type="Gene3D" id="2.70.150.10">
    <property type="entry name" value="Calcium-transporting ATPase, cytoplasmic transduction domain A"/>
    <property type="match status" value="1"/>
</dbReference>
<dbReference type="Gene3D" id="3.40.50.1000">
    <property type="entry name" value="HAD superfamily/HAD-like"/>
    <property type="match status" value="1"/>
</dbReference>
<dbReference type="HAMAP" id="MF_00285">
    <property type="entry name" value="KdpB"/>
    <property type="match status" value="1"/>
</dbReference>
<dbReference type="InterPro" id="IPR023299">
    <property type="entry name" value="ATPase_P-typ_cyto_dom_N"/>
</dbReference>
<dbReference type="InterPro" id="IPR018303">
    <property type="entry name" value="ATPase_P-typ_P_site"/>
</dbReference>
<dbReference type="InterPro" id="IPR023298">
    <property type="entry name" value="ATPase_P-typ_TM_dom_sf"/>
</dbReference>
<dbReference type="InterPro" id="IPR008250">
    <property type="entry name" value="ATPase_P-typ_transduc_dom_A_sf"/>
</dbReference>
<dbReference type="InterPro" id="IPR036412">
    <property type="entry name" value="HAD-like_sf"/>
</dbReference>
<dbReference type="InterPro" id="IPR023214">
    <property type="entry name" value="HAD_sf"/>
</dbReference>
<dbReference type="InterPro" id="IPR006391">
    <property type="entry name" value="P-type_ATPase_bsu_IA"/>
</dbReference>
<dbReference type="InterPro" id="IPR001757">
    <property type="entry name" value="P_typ_ATPase"/>
</dbReference>
<dbReference type="InterPro" id="IPR044492">
    <property type="entry name" value="P_typ_ATPase_HD_dom"/>
</dbReference>
<dbReference type="NCBIfam" id="TIGR01494">
    <property type="entry name" value="ATPase_P-type"/>
    <property type="match status" value="2"/>
</dbReference>
<dbReference type="NCBIfam" id="TIGR01497">
    <property type="entry name" value="kdpB"/>
    <property type="match status" value="1"/>
</dbReference>
<dbReference type="PANTHER" id="PTHR43743">
    <property type="entry name" value="POTASSIUM-TRANSPORTING ATPASE ATP-BINDING SUBUNIT"/>
    <property type="match status" value="1"/>
</dbReference>
<dbReference type="PANTHER" id="PTHR43743:SF1">
    <property type="entry name" value="POTASSIUM-TRANSPORTING ATPASE ATP-BINDING SUBUNIT"/>
    <property type="match status" value="1"/>
</dbReference>
<dbReference type="Pfam" id="PF00122">
    <property type="entry name" value="E1-E2_ATPase"/>
    <property type="match status" value="1"/>
</dbReference>
<dbReference type="Pfam" id="PF00702">
    <property type="entry name" value="Hydrolase"/>
    <property type="match status" value="1"/>
</dbReference>
<dbReference type="PRINTS" id="PR00119">
    <property type="entry name" value="CATATPASE"/>
</dbReference>
<dbReference type="SFLD" id="SFLDS00003">
    <property type="entry name" value="Haloacid_Dehalogenase"/>
    <property type="match status" value="1"/>
</dbReference>
<dbReference type="SFLD" id="SFLDF00027">
    <property type="entry name" value="p-type_atpase"/>
    <property type="match status" value="1"/>
</dbReference>
<dbReference type="SUPFAM" id="SSF81653">
    <property type="entry name" value="Calcium ATPase, transduction domain A"/>
    <property type="match status" value="1"/>
</dbReference>
<dbReference type="SUPFAM" id="SSF81665">
    <property type="entry name" value="Calcium ATPase, transmembrane domain M"/>
    <property type="match status" value="1"/>
</dbReference>
<dbReference type="SUPFAM" id="SSF56784">
    <property type="entry name" value="HAD-like"/>
    <property type="match status" value="1"/>
</dbReference>
<dbReference type="PROSITE" id="PS00154">
    <property type="entry name" value="ATPASE_E1_E2"/>
    <property type="match status" value="1"/>
</dbReference>
<accession>Q8KU73</accession>
<proteinExistence type="inferred from homology"/>
<protein>
    <recommendedName>
        <fullName evidence="1">Potassium-transporting ATPase ATP-binding subunit</fullName>
        <ecNumber evidence="1">7.2.2.6</ecNumber>
    </recommendedName>
    <alternativeName>
        <fullName evidence="1">ATP phosphohydrolase [potassium-transporting] B chain</fullName>
    </alternativeName>
    <alternativeName>
        <fullName evidence="1">Potassium-binding and translocating subunit B</fullName>
    </alternativeName>
    <alternativeName>
        <fullName evidence="1">Potassium-translocating ATPase B chain</fullName>
    </alternativeName>
</protein>
<comment type="function">
    <text evidence="1">Part of the high-affinity ATP-driven potassium transport (or Kdp) system, which catalyzes the hydrolysis of ATP coupled with the electrogenic transport of potassium into the cytoplasm. This subunit is responsible for energy coupling to the transport system and for the release of the potassium ions to the cytoplasm.</text>
</comment>
<comment type="catalytic activity">
    <reaction evidence="1">
        <text>K(+)(out) + ATP + H2O = K(+)(in) + ADP + phosphate + H(+)</text>
        <dbReference type="Rhea" id="RHEA:16777"/>
        <dbReference type="ChEBI" id="CHEBI:15377"/>
        <dbReference type="ChEBI" id="CHEBI:15378"/>
        <dbReference type="ChEBI" id="CHEBI:29103"/>
        <dbReference type="ChEBI" id="CHEBI:30616"/>
        <dbReference type="ChEBI" id="CHEBI:43474"/>
        <dbReference type="ChEBI" id="CHEBI:456216"/>
        <dbReference type="EC" id="7.2.2.6"/>
    </reaction>
    <physiologicalReaction direction="left-to-right" evidence="1">
        <dbReference type="Rhea" id="RHEA:16778"/>
    </physiologicalReaction>
</comment>
<comment type="subunit">
    <text evidence="1">The system is composed of three essential subunits: KdpA, KdpB and KdpC.</text>
</comment>
<comment type="subcellular location">
    <subcellularLocation>
        <location evidence="1">Cell membrane</location>
        <topology evidence="1">Multi-pass membrane protein</topology>
    </subcellularLocation>
</comment>
<comment type="similarity">
    <text evidence="1">Belongs to the cation transport ATPase (P-type) (TC 3.A.3) family. Type IA subfamily.</text>
</comment>
<reference key="1">
    <citation type="journal article" date="2002" name="Nature">
        <title>Modulation of virulence within a pathogenicity island in vancomycin-resistant Enterococcus faecalis.</title>
        <authorList>
            <person name="Shankar N."/>
            <person name="Baghdayan A.S."/>
            <person name="Gilmore M.S."/>
        </authorList>
    </citation>
    <scope>NUCLEOTIDE SEQUENCE [GENOMIC DNA]</scope>
</reference>
<reference key="2">
    <citation type="journal article" date="2003" name="Science">
        <title>Role of mobile DNA in the evolution of vancomycin-resistant Enterococcus faecalis.</title>
        <authorList>
            <person name="Paulsen I.T."/>
            <person name="Banerjei L."/>
            <person name="Myers G.S.A."/>
            <person name="Nelson K.E."/>
            <person name="Seshadri R."/>
            <person name="Read T.D."/>
            <person name="Fouts D.E."/>
            <person name="Eisen J.A."/>
            <person name="Gill S.R."/>
            <person name="Heidelberg J.F."/>
            <person name="Tettelin H."/>
            <person name="Dodson R.J."/>
            <person name="Umayam L.A."/>
            <person name="Brinkac L.M."/>
            <person name="Beanan M.J."/>
            <person name="Daugherty S.C."/>
            <person name="DeBoy R.T."/>
            <person name="Durkin S.A."/>
            <person name="Kolonay J.F."/>
            <person name="Madupu R."/>
            <person name="Nelson W.C."/>
            <person name="Vamathevan J.J."/>
            <person name="Tran B."/>
            <person name="Upton J."/>
            <person name="Hansen T."/>
            <person name="Shetty J."/>
            <person name="Khouri H.M."/>
            <person name="Utterback T.R."/>
            <person name="Radune D."/>
            <person name="Ketchum K.A."/>
            <person name="Dougherty B.A."/>
            <person name="Fraser C.M."/>
        </authorList>
    </citation>
    <scope>NUCLEOTIDE SEQUENCE [LARGE SCALE GENOMIC DNA]</scope>
    <source>
        <strain>ATCC 700802 / V583</strain>
    </source>
</reference>
<gene>
    <name evidence="1" type="primary">kdpB</name>
    <name type="ordered locus">EF_0568</name>
    <name type="ORF">ef-0088</name>
</gene>
<keyword id="KW-0067">ATP-binding</keyword>
<keyword id="KW-1003">Cell membrane</keyword>
<keyword id="KW-0406">Ion transport</keyword>
<keyword id="KW-0460">Magnesium</keyword>
<keyword id="KW-0472">Membrane</keyword>
<keyword id="KW-0479">Metal-binding</keyword>
<keyword id="KW-0547">Nucleotide-binding</keyword>
<keyword id="KW-0597">Phosphoprotein</keyword>
<keyword id="KW-0630">Potassium</keyword>
<keyword id="KW-0633">Potassium transport</keyword>
<keyword id="KW-1185">Reference proteome</keyword>
<keyword id="KW-1278">Translocase</keyword>
<keyword id="KW-0812">Transmembrane</keyword>
<keyword id="KW-1133">Transmembrane helix</keyword>
<keyword id="KW-0813">Transport</keyword>
<sequence length="676" mass="73309">MKKIYQWAVGQSFKKLDPRQQVKNPVMFVVYLGALITTILCFYPMGIPLWFNISITIFLWLTLLFANFAEAVAEGRGKAQADSLKQAKKEVMTYKINSLEDIKEENFIELQSSDLKRNDLVYVRAGEQIPADGDVIEGAASVDESAITGESAPVIRESGGDRSAVTGGTTVVSDYLVIRVTSENGQSFLDKMIAMVEGTQRKKTPNEIGLQIFLITLTIIFLTVSITLVPFTDFSSQLSGKGEALSLVIVIALLICLAPTTIGALISSIGIAGMSRLTKENVIAMSGRAIEAAGDVDVLLLDKTGTITLGNRRASDFLPVHGVSEEQLADAAQLSSLADETAEGRSIVILAKERFNLREREFQQSEVKFIDFSAKTRMSGIDYRGDVIRKGAADTMKKYVQSKGEDYPSECDKIVDKIARAGGTPLVVIKNNRVMGVVYLKDIVKNGVKEKFADMRKMGIKTIMITGDNPLTAAAIAAEAGVDDFLAEATPENKMNLIREYQEKGHLVAMTGDGTNDAPALAQADVAMAMNTGTQAAKEAGNMIDLDSSPTKLLQVVQIGKQLLMTRGALTTFSIANDIAKYFAVIPVLFYSIYPQLDRLNIMGLGSPLTAILSAVIYNAVVIVALIPLALKGVRYQEKPASQILSHNLLIYGLGGIIAPFIFIKIIDLILSLIIL</sequence>
<name>KDPB_ENTFA</name>
<evidence type="ECO:0000255" key="1">
    <source>
        <dbReference type="HAMAP-Rule" id="MF_00285"/>
    </source>
</evidence>